<organism>
    <name type="scientific">Escherichia coli (strain K12)</name>
    <dbReference type="NCBI Taxonomy" id="83333"/>
    <lineage>
        <taxon>Bacteria</taxon>
        <taxon>Pseudomonadati</taxon>
        <taxon>Pseudomonadota</taxon>
        <taxon>Gammaproteobacteria</taxon>
        <taxon>Enterobacterales</taxon>
        <taxon>Enterobacteriaceae</taxon>
        <taxon>Escherichia</taxon>
    </lineage>
</organism>
<reference key="1">
    <citation type="journal article" date="1994" name="Proc. Natl. Acad. Sci. U.S.A.">
        <title>A tRNA-like structure is present in 10Sa RNA, a small stable RNA from Escherichia coli.</title>
        <authorList>
            <person name="Komine Y."/>
            <person name="Kitabatake M."/>
            <person name="Yokogawa T."/>
            <person name="Nishikawa K."/>
            <person name="Inokuchi H."/>
        </authorList>
    </citation>
    <scope>NUCLEOTIDE SEQUENCE [GENOMIC DNA]</scope>
    <source>
        <strain>K12</strain>
    </source>
</reference>
<reference key="2">
    <citation type="journal article" date="1997" name="DNA Res.">
        <title>Construction of a contiguous 874-kb sequence of the Escherichia coli-K12 genome corresponding to 50.0-68.8 min on the linkage map and analysis of its sequence features.</title>
        <authorList>
            <person name="Yamamoto Y."/>
            <person name="Aiba H."/>
            <person name="Baba T."/>
            <person name="Hayashi K."/>
            <person name="Inada T."/>
            <person name="Isono K."/>
            <person name="Itoh T."/>
            <person name="Kimura S."/>
            <person name="Kitagawa M."/>
            <person name="Makino K."/>
            <person name="Miki T."/>
            <person name="Mitsuhashi N."/>
            <person name="Mizobuchi K."/>
            <person name="Mori H."/>
            <person name="Nakade S."/>
            <person name="Nakamura Y."/>
            <person name="Nashimoto H."/>
            <person name="Oshima T."/>
            <person name="Oyama S."/>
            <person name="Saito N."/>
            <person name="Sampei G."/>
            <person name="Satoh Y."/>
            <person name="Sivasundaram S."/>
            <person name="Tagami H."/>
            <person name="Takahashi H."/>
            <person name="Takeda J."/>
            <person name="Takemoto K."/>
            <person name="Uehara K."/>
            <person name="Wada C."/>
            <person name="Yamagata S."/>
            <person name="Horiuchi T."/>
        </authorList>
    </citation>
    <scope>NUCLEOTIDE SEQUENCE [LARGE SCALE GENOMIC DNA]</scope>
    <source>
        <strain>K12 / W3110 / ATCC 27325 / DSM 5911</strain>
    </source>
</reference>
<reference key="3">
    <citation type="journal article" date="1997" name="Science">
        <title>The complete genome sequence of Escherichia coli K-12.</title>
        <authorList>
            <person name="Blattner F.R."/>
            <person name="Plunkett G. III"/>
            <person name="Bloch C.A."/>
            <person name="Perna N.T."/>
            <person name="Burland V."/>
            <person name="Riley M."/>
            <person name="Collado-Vides J."/>
            <person name="Glasner J.D."/>
            <person name="Rode C.K."/>
            <person name="Mayhew G.F."/>
            <person name="Gregor J."/>
            <person name="Davis N.W."/>
            <person name="Kirkpatrick H.A."/>
            <person name="Goeden M.A."/>
            <person name="Rose D.J."/>
            <person name="Mau B."/>
            <person name="Shao Y."/>
        </authorList>
    </citation>
    <scope>NUCLEOTIDE SEQUENCE [LARGE SCALE GENOMIC DNA]</scope>
    <source>
        <strain>K12 / MG1655 / ATCC 47076</strain>
    </source>
</reference>
<reference key="4">
    <citation type="journal article" date="2006" name="Mol. Syst. Biol.">
        <title>Highly accurate genome sequences of Escherichia coli K-12 strains MG1655 and W3110.</title>
        <authorList>
            <person name="Hayashi K."/>
            <person name="Morooka N."/>
            <person name="Yamamoto Y."/>
            <person name="Fujita K."/>
            <person name="Isono K."/>
            <person name="Choi S."/>
            <person name="Ohtsubo E."/>
            <person name="Baba T."/>
            <person name="Wanner B.L."/>
            <person name="Mori H."/>
            <person name="Horiuchi T."/>
        </authorList>
    </citation>
    <scope>NUCLEOTIDE SEQUENCE [LARGE SCALE GENOMIC DNA]</scope>
    <source>
        <strain>K12 / W3110 / ATCC 27325 / DSM 5911</strain>
    </source>
</reference>
<reference key="5">
    <citation type="journal article" date="2003" name="J. Bacteriol.">
        <title>A novel family of Escherichia coli toxin-antitoxin gene pairs.</title>
        <authorList>
            <person name="Brown J.M."/>
            <person name="Shaw K.J."/>
        </authorList>
    </citation>
    <scope>FUNCTION AS A TOXIN</scope>
    <source>
        <strain>K12 / MG1655 / ATCC 47076</strain>
    </source>
</reference>
<reference key="6">
    <citation type="journal article" date="2011" name="Mol. Microbiol.">
        <title>RatA (YfjG), an Escherichia coli toxin, inhibits 70S ribosome association to block translation initiation.</title>
        <authorList>
            <person name="Zhang Y."/>
            <person name="Inouye M."/>
        </authorList>
    </citation>
    <scope>FUNCTION AS A TOXIN</scope>
    <scope>SUBUNIT</scope>
</reference>
<reference key="7">
    <citation type="journal article" date="2012" name="PLoS Pathog.">
        <title>Toxin-antitoxin systems are important for niche-specific colonization and stress resistance of uropathogenic Escherichia coli.</title>
        <authorList>
            <person name="Norton J.P."/>
            <person name="Mulvey M.A."/>
        </authorList>
    </citation>
    <scope>ROLE IN STRESS RESPONSE</scope>
    <scope>DISRUPTION PHENOTYPE</scope>
    <source>
        <strain>K12 / MG1655 / ATCC 47076</strain>
    </source>
</reference>
<accession>P0AGL5</accession>
<accession>P52121</accession>
<comment type="function">
    <text>Toxic component of a type II toxin-antitoxin (TA) system. Binds to 50S ribosomal subunits, preventing them from associating with 30S subunits to form 70S ribosomes and reducing polysomes. It does not cause ribosomes to dissociate however. The antibiotic paromomycin blocks the anti-association activity of RatA. Overexpression results in inhibition of growth in liquid cultures, and in a decrease in protein translation. The other gene of this operon, ratB, is not the cognate antitoxin in this strain; in CFT073 however it does fulfill this function.</text>
</comment>
<comment type="function">
    <text>Low level expression in a deletion mutant increases resistance to acidified sodium nitrate which causes nitrosative stress.</text>
</comment>
<comment type="subunit">
    <text evidence="1">Associates with 50S ribosomes.</text>
</comment>
<comment type="disruption phenotype">
    <text evidence="2">Deletion of the ratA-ratB operon has no effect on bacterial persistence on rich medium for this strain, but does affect bacterial persistence for E.coli strain CFT073.</text>
</comment>
<comment type="similarity">
    <text evidence="3">Belongs to the ribosome association toxin RatA family.</text>
</comment>
<proteinExistence type="evidence at protein level"/>
<feature type="chain" id="PRO_0000192474" description="Ribosome association toxin RatA">
    <location>
        <begin position="1"/>
        <end position="158"/>
    </location>
</feature>
<protein>
    <recommendedName>
        <fullName>Ribosome association toxin RatA</fullName>
    </recommendedName>
    <alternativeName>
        <fullName>Toxin RatA</fullName>
    </alternativeName>
</protein>
<evidence type="ECO:0000269" key="1">
    <source>
    </source>
</evidence>
<evidence type="ECO:0000269" key="2">
    <source>
    </source>
</evidence>
<evidence type="ECO:0000305" key="3"/>
<dbReference type="EMBL" id="D12501">
    <property type="status" value="NOT_ANNOTATED_CDS"/>
    <property type="molecule type" value="Genomic_DNA"/>
</dbReference>
<dbReference type="EMBL" id="U36840">
    <property type="protein sequence ID" value="AAA79789.1"/>
    <property type="molecule type" value="Genomic_DNA"/>
</dbReference>
<dbReference type="EMBL" id="U00096">
    <property type="protein sequence ID" value="AAC75668.1"/>
    <property type="molecule type" value="Genomic_DNA"/>
</dbReference>
<dbReference type="EMBL" id="AP009048">
    <property type="protein sequence ID" value="BAA16504.1"/>
    <property type="molecule type" value="Genomic_DNA"/>
</dbReference>
<dbReference type="PIR" id="T08632">
    <property type="entry name" value="T08632"/>
</dbReference>
<dbReference type="RefSeq" id="NP_417109.1">
    <property type="nucleotide sequence ID" value="NC_000913.3"/>
</dbReference>
<dbReference type="SMR" id="P0AGL5"/>
<dbReference type="BioGRID" id="4263441">
    <property type="interactions" value="18"/>
</dbReference>
<dbReference type="FunCoup" id="P0AGL5">
    <property type="interactions" value="344"/>
</dbReference>
<dbReference type="IntAct" id="P0AGL5">
    <property type="interactions" value="1"/>
</dbReference>
<dbReference type="STRING" id="511145.b2619"/>
<dbReference type="jPOST" id="P0AGL5"/>
<dbReference type="PaxDb" id="511145-b2619"/>
<dbReference type="EnsemblBacteria" id="AAC75668">
    <property type="protein sequence ID" value="AAC75668"/>
    <property type="gene ID" value="b2619"/>
</dbReference>
<dbReference type="GeneID" id="945614"/>
<dbReference type="KEGG" id="ecj:JW2600"/>
<dbReference type="KEGG" id="eco:b2619"/>
<dbReference type="KEGG" id="ecoc:C3026_14495"/>
<dbReference type="PATRIC" id="fig|511145.12.peg.2717"/>
<dbReference type="EchoBASE" id="EB2985"/>
<dbReference type="eggNOG" id="COG2867">
    <property type="taxonomic scope" value="Bacteria"/>
</dbReference>
<dbReference type="HOGENOM" id="CLU_079653_3_1_6"/>
<dbReference type="InParanoid" id="P0AGL5"/>
<dbReference type="OMA" id="IDGPFKY"/>
<dbReference type="OrthoDB" id="9804759at2"/>
<dbReference type="PhylomeDB" id="P0AGL5"/>
<dbReference type="BioCyc" id="EcoCyc:G7358-MONOMER"/>
<dbReference type="PRO" id="PR:P0AGL5"/>
<dbReference type="Proteomes" id="UP000000625">
    <property type="component" value="Chromosome"/>
</dbReference>
<dbReference type="GO" id="GO:0043023">
    <property type="term" value="F:ribosomal large subunit binding"/>
    <property type="evidence" value="ECO:0000314"/>
    <property type="project" value="EcoCyc"/>
</dbReference>
<dbReference type="GO" id="GO:0048039">
    <property type="term" value="F:ubiquinone binding"/>
    <property type="evidence" value="ECO:0007669"/>
    <property type="project" value="InterPro"/>
</dbReference>
<dbReference type="GO" id="GO:0045333">
    <property type="term" value="P:cellular respiration"/>
    <property type="evidence" value="ECO:0007669"/>
    <property type="project" value="InterPro"/>
</dbReference>
<dbReference type="GO" id="GO:0045947">
    <property type="term" value="P:negative regulation of translational initiation"/>
    <property type="evidence" value="ECO:0000315"/>
    <property type="project" value="EcoCyc"/>
</dbReference>
<dbReference type="CDD" id="cd07813">
    <property type="entry name" value="COQ10p_like"/>
    <property type="match status" value="1"/>
</dbReference>
<dbReference type="FunFam" id="3.30.530.20:FF:000005">
    <property type="entry name" value="Type II toxin-antitoxin system toxin RatA"/>
    <property type="match status" value="1"/>
</dbReference>
<dbReference type="Gene3D" id="3.30.530.20">
    <property type="match status" value="1"/>
</dbReference>
<dbReference type="InterPro" id="IPR044996">
    <property type="entry name" value="COQ10-like"/>
</dbReference>
<dbReference type="InterPro" id="IPR005031">
    <property type="entry name" value="COQ10_START"/>
</dbReference>
<dbReference type="InterPro" id="IPR023393">
    <property type="entry name" value="START-like_dom_sf"/>
</dbReference>
<dbReference type="NCBIfam" id="NF007999">
    <property type="entry name" value="PRK10724.1"/>
    <property type="match status" value="1"/>
</dbReference>
<dbReference type="PANTHER" id="PTHR12901:SF10">
    <property type="entry name" value="COENZYME Q-BINDING PROTEIN COQ10, MITOCHONDRIAL"/>
    <property type="match status" value="1"/>
</dbReference>
<dbReference type="PANTHER" id="PTHR12901">
    <property type="entry name" value="SPERM PROTEIN HOMOLOG"/>
    <property type="match status" value="1"/>
</dbReference>
<dbReference type="Pfam" id="PF03364">
    <property type="entry name" value="Polyketide_cyc"/>
    <property type="match status" value="1"/>
</dbReference>
<dbReference type="SUPFAM" id="SSF55961">
    <property type="entry name" value="Bet v1-like"/>
    <property type="match status" value="1"/>
</dbReference>
<gene>
    <name type="primary">ratA</name>
    <name type="synonym">pasT</name>
    <name type="synonym">yfjG</name>
    <name type="ordered locus">b2619</name>
    <name type="ordered locus">JW2600</name>
</gene>
<keyword id="KW-1185">Reference proteome</keyword>
<keyword id="KW-0346">Stress response</keyword>
<keyword id="KW-1277">Toxin-antitoxin system</keyword>
<name>RATA_ECOLI</name>
<sequence length="158" mass="17727">MILFVGFLLMEIVMPQISRTALVPYSAEQMYQLVNDVQSYPQFLPGCTGSRILESTPGQMTAAVDVSKAGISKTFTTRNQLTSNQSILMNLVDGPFKKLIGGWKFTPLSQEACRIEFHLDFEFTNKLIELAFGRVFKELAANMVQAFTVRAKEVYSAR</sequence>